<dbReference type="EMBL" id="AM263198">
    <property type="protein sequence ID" value="CAK19419.1"/>
    <property type="molecule type" value="Genomic_DNA"/>
</dbReference>
<dbReference type="RefSeq" id="WP_003759425.1">
    <property type="nucleotide sequence ID" value="NC_008555.1"/>
</dbReference>
<dbReference type="SMR" id="A0AEI7"/>
<dbReference type="STRING" id="386043.lwe0001"/>
<dbReference type="GeneID" id="93233494"/>
<dbReference type="KEGG" id="lwe:lwe0001"/>
<dbReference type="eggNOG" id="COG0593">
    <property type="taxonomic scope" value="Bacteria"/>
</dbReference>
<dbReference type="HOGENOM" id="CLU_026910_3_1_9"/>
<dbReference type="OrthoDB" id="9807019at2"/>
<dbReference type="Proteomes" id="UP000000779">
    <property type="component" value="Chromosome"/>
</dbReference>
<dbReference type="GO" id="GO:0005737">
    <property type="term" value="C:cytoplasm"/>
    <property type="evidence" value="ECO:0007669"/>
    <property type="project" value="UniProtKB-SubCell"/>
</dbReference>
<dbReference type="GO" id="GO:0005886">
    <property type="term" value="C:plasma membrane"/>
    <property type="evidence" value="ECO:0007669"/>
    <property type="project" value="TreeGrafter"/>
</dbReference>
<dbReference type="GO" id="GO:0005524">
    <property type="term" value="F:ATP binding"/>
    <property type="evidence" value="ECO:0007669"/>
    <property type="project" value="UniProtKB-UniRule"/>
</dbReference>
<dbReference type="GO" id="GO:0016887">
    <property type="term" value="F:ATP hydrolysis activity"/>
    <property type="evidence" value="ECO:0007669"/>
    <property type="project" value="InterPro"/>
</dbReference>
<dbReference type="GO" id="GO:0003688">
    <property type="term" value="F:DNA replication origin binding"/>
    <property type="evidence" value="ECO:0007669"/>
    <property type="project" value="UniProtKB-UniRule"/>
</dbReference>
<dbReference type="GO" id="GO:0008289">
    <property type="term" value="F:lipid binding"/>
    <property type="evidence" value="ECO:0007669"/>
    <property type="project" value="UniProtKB-KW"/>
</dbReference>
<dbReference type="GO" id="GO:0006270">
    <property type="term" value="P:DNA replication initiation"/>
    <property type="evidence" value="ECO:0007669"/>
    <property type="project" value="UniProtKB-UniRule"/>
</dbReference>
<dbReference type="GO" id="GO:0006275">
    <property type="term" value="P:regulation of DNA replication"/>
    <property type="evidence" value="ECO:0007669"/>
    <property type="project" value="UniProtKB-UniRule"/>
</dbReference>
<dbReference type="CDD" id="cd00009">
    <property type="entry name" value="AAA"/>
    <property type="match status" value="1"/>
</dbReference>
<dbReference type="CDD" id="cd06571">
    <property type="entry name" value="Bac_DnaA_C"/>
    <property type="match status" value="1"/>
</dbReference>
<dbReference type="FunFam" id="1.10.1750.10:FF:000003">
    <property type="entry name" value="Chromosomal replication initiator protein DnaA"/>
    <property type="match status" value="1"/>
</dbReference>
<dbReference type="FunFam" id="1.10.8.60:FF:000003">
    <property type="entry name" value="Chromosomal replication initiator protein DnaA"/>
    <property type="match status" value="1"/>
</dbReference>
<dbReference type="FunFam" id="3.40.50.300:FF:000150">
    <property type="entry name" value="Chromosomal replication initiator protein DnaA"/>
    <property type="match status" value="1"/>
</dbReference>
<dbReference type="Gene3D" id="1.10.1750.10">
    <property type="match status" value="1"/>
</dbReference>
<dbReference type="Gene3D" id="1.10.8.60">
    <property type="match status" value="1"/>
</dbReference>
<dbReference type="Gene3D" id="3.30.300.180">
    <property type="match status" value="1"/>
</dbReference>
<dbReference type="Gene3D" id="3.40.50.300">
    <property type="entry name" value="P-loop containing nucleotide triphosphate hydrolases"/>
    <property type="match status" value="1"/>
</dbReference>
<dbReference type="HAMAP" id="MF_00377">
    <property type="entry name" value="DnaA_bact"/>
    <property type="match status" value="1"/>
</dbReference>
<dbReference type="InterPro" id="IPR003593">
    <property type="entry name" value="AAA+_ATPase"/>
</dbReference>
<dbReference type="InterPro" id="IPR001957">
    <property type="entry name" value="Chromosome_initiator_DnaA"/>
</dbReference>
<dbReference type="InterPro" id="IPR020591">
    <property type="entry name" value="Chromosome_initiator_DnaA-like"/>
</dbReference>
<dbReference type="InterPro" id="IPR018312">
    <property type="entry name" value="Chromosome_initiator_DnaA_CS"/>
</dbReference>
<dbReference type="InterPro" id="IPR013159">
    <property type="entry name" value="DnaA_C"/>
</dbReference>
<dbReference type="InterPro" id="IPR013317">
    <property type="entry name" value="DnaA_dom"/>
</dbReference>
<dbReference type="InterPro" id="IPR024633">
    <property type="entry name" value="DnaA_N_dom"/>
</dbReference>
<dbReference type="InterPro" id="IPR038454">
    <property type="entry name" value="DnaA_N_sf"/>
</dbReference>
<dbReference type="InterPro" id="IPR027417">
    <property type="entry name" value="P-loop_NTPase"/>
</dbReference>
<dbReference type="InterPro" id="IPR010921">
    <property type="entry name" value="Trp_repressor/repl_initiator"/>
</dbReference>
<dbReference type="NCBIfam" id="TIGR00362">
    <property type="entry name" value="DnaA"/>
    <property type="match status" value="1"/>
</dbReference>
<dbReference type="NCBIfam" id="NF010686">
    <property type="entry name" value="PRK14086.1"/>
    <property type="match status" value="1"/>
</dbReference>
<dbReference type="PANTHER" id="PTHR30050">
    <property type="entry name" value="CHROMOSOMAL REPLICATION INITIATOR PROTEIN DNAA"/>
    <property type="match status" value="1"/>
</dbReference>
<dbReference type="PANTHER" id="PTHR30050:SF2">
    <property type="entry name" value="CHROMOSOMAL REPLICATION INITIATOR PROTEIN DNAA"/>
    <property type="match status" value="1"/>
</dbReference>
<dbReference type="Pfam" id="PF00308">
    <property type="entry name" value="Bac_DnaA"/>
    <property type="match status" value="1"/>
</dbReference>
<dbReference type="Pfam" id="PF08299">
    <property type="entry name" value="Bac_DnaA_C"/>
    <property type="match status" value="1"/>
</dbReference>
<dbReference type="Pfam" id="PF11638">
    <property type="entry name" value="DnaA_N"/>
    <property type="match status" value="1"/>
</dbReference>
<dbReference type="PRINTS" id="PR00051">
    <property type="entry name" value="DNAA"/>
</dbReference>
<dbReference type="SMART" id="SM00382">
    <property type="entry name" value="AAA"/>
    <property type="match status" value="1"/>
</dbReference>
<dbReference type="SMART" id="SM00760">
    <property type="entry name" value="Bac_DnaA_C"/>
    <property type="match status" value="1"/>
</dbReference>
<dbReference type="SUPFAM" id="SSF52540">
    <property type="entry name" value="P-loop containing nucleoside triphosphate hydrolases"/>
    <property type="match status" value="1"/>
</dbReference>
<dbReference type="SUPFAM" id="SSF48295">
    <property type="entry name" value="TrpR-like"/>
    <property type="match status" value="1"/>
</dbReference>
<dbReference type="PROSITE" id="PS01008">
    <property type="entry name" value="DNAA"/>
    <property type="match status" value="1"/>
</dbReference>
<comment type="function">
    <text evidence="1">Plays an essential role in the initiation and regulation of chromosomal replication. ATP-DnaA binds to the origin of replication (oriC) to initiate formation of the DNA replication initiation complex once per cell cycle. Binds the DnaA box (a 9 base pair repeat at the origin) and separates the double-stranded (ds)DNA. Forms a right-handed helical filament on oriC DNA; dsDNA binds to the exterior of the filament while single-stranded (ss)DNA is stabiized in the filament's interior. The ATP-DnaA-oriC complex binds and stabilizes one strand of the AT-rich DNA unwinding element (DUE), permitting loading of DNA polymerase. After initiation quickly degrades to an ADP-DnaA complex that is not apt for DNA replication. Binds acidic phospholipids.</text>
</comment>
<comment type="subunit">
    <text evidence="1">Oligomerizes as a right-handed, spiral filament on DNA at oriC.</text>
</comment>
<comment type="subcellular location">
    <subcellularLocation>
        <location evidence="1">Cytoplasm</location>
    </subcellularLocation>
</comment>
<comment type="domain">
    <text evidence="1">Domain I is involved in oligomerization and binding regulators, domain II is flexibile and of varying length in different bacteria, domain III forms the AAA+ region, while domain IV binds dsDNA.</text>
</comment>
<comment type="similarity">
    <text evidence="1">Belongs to the DnaA family.</text>
</comment>
<organism>
    <name type="scientific">Listeria welshimeri serovar 6b (strain ATCC 35897 / DSM 20650 / CCUG 15529 / CIP 8149 / NCTC 11857 / SLCC 5334 / V8)</name>
    <dbReference type="NCBI Taxonomy" id="386043"/>
    <lineage>
        <taxon>Bacteria</taxon>
        <taxon>Bacillati</taxon>
        <taxon>Bacillota</taxon>
        <taxon>Bacilli</taxon>
        <taxon>Bacillales</taxon>
        <taxon>Listeriaceae</taxon>
        <taxon>Listeria</taxon>
    </lineage>
</organism>
<gene>
    <name evidence="1" type="primary">dnaA</name>
    <name type="ordered locus">lwe0001</name>
</gene>
<protein>
    <recommendedName>
        <fullName evidence="1">Chromosomal replication initiator protein DnaA</fullName>
    </recommendedName>
</protein>
<keyword id="KW-0067">ATP-binding</keyword>
<keyword id="KW-0963">Cytoplasm</keyword>
<keyword id="KW-0235">DNA replication</keyword>
<keyword id="KW-0238">DNA-binding</keyword>
<keyword id="KW-0446">Lipid-binding</keyword>
<keyword id="KW-0547">Nucleotide-binding</keyword>
<name>DNAA_LISW6</name>
<proteinExistence type="inferred from homology"/>
<evidence type="ECO:0000255" key="1">
    <source>
        <dbReference type="HAMAP-Rule" id="MF_00377"/>
    </source>
</evidence>
<sequence length="451" mass="51427">MQSIEDIWQETLQIVKKNMSKPSYDTWMKSTTAHSLEGNTFIISAPNNFVRDWLEKSYTQFIANILQEITGRLFDVRFIDGEQEENFEYTVIKPNPALDEDGIEIGKHMLNPRYVFDTFVIGSGNRFAHAASLAVAEAPAKAYNPLFIYGGVGLGKTHLMHAVGHYVQQHKDNAKVMYLSSEKFTNEFISSIRDNKTEEFRTKYRNVDVLLIDDIQFLAGKEGTQEEFFHTFNTLYDEQKQIIISSDRPPKEIPTLEDRLRSRFEWGLITDITPPDLETRIAILRKKAKADGLDIPNEVMLYIANQIDSNIRELEGALIRVVAYSSLVNKDITAGLAAEALKDIIPSSKSQVITISGIQETVGEYFHVRLEDFKAKKRTKSIAFPRQIAMYLSRELTDASLPKIGDEFGGRDHTTVIHAHEKISQLLKTDQVLKNDLAEIEKNLRKSQNMF</sequence>
<accession>A0AEI7</accession>
<reference key="1">
    <citation type="journal article" date="2006" name="J. Bacteriol.">
        <title>Whole-genome sequence of Listeria welshimeri reveals common steps in genome reduction with Listeria innocua as compared to Listeria monocytogenes.</title>
        <authorList>
            <person name="Hain T."/>
            <person name="Steinweg C."/>
            <person name="Kuenne C.T."/>
            <person name="Billion A."/>
            <person name="Ghai R."/>
            <person name="Chatterjee S.S."/>
            <person name="Domann E."/>
            <person name="Kaerst U."/>
            <person name="Goesmann A."/>
            <person name="Bekel T."/>
            <person name="Bartels D."/>
            <person name="Kaiser O."/>
            <person name="Meyer F."/>
            <person name="Puehler A."/>
            <person name="Weisshaar B."/>
            <person name="Wehland J."/>
            <person name="Liang C."/>
            <person name="Dandekar T."/>
            <person name="Lampidis R."/>
            <person name="Kreft J."/>
            <person name="Goebel W."/>
            <person name="Chakraborty T."/>
        </authorList>
    </citation>
    <scope>NUCLEOTIDE SEQUENCE [LARGE SCALE GENOMIC DNA]</scope>
    <source>
        <strain>ATCC 35897 / DSM 20650 / CCUG 15529 / CIP 8149 / NCTC 11857 / SLCC 5334 / V8</strain>
    </source>
</reference>
<feature type="chain" id="PRO_1000048667" description="Chromosomal replication initiator protein DnaA">
    <location>
        <begin position="1"/>
        <end position="451"/>
    </location>
</feature>
<feature type="region of interest" description="Domain I, interacts with DnaA modulators" evidence="1">
    <location>
        <begin position="1"/>
        <end position="72"/>
    </location>
</feature>
<feature type="region of interest" description="Domain II" evidence="1">
    <location>
        <begin position="72"/>
        <end position="108"/>
    </location>
</feature>
<feature type="region of interest" description="Domain III, AAA+ region" evidence="1">
    <location>
        <begin position="109"/>
        <end position="325"/>
    </location>
</feature>
<feature type="region of interest" description="Domain IV, binds dsDNA" evidence="1">
    <location>
        <begin position="326"/>
        <end position="451"/>
    </location>
</feature>
<feature type="binding site" evidence="1">
    <location>
        <position position="153"/>
    </location>
    <ligand>
        <name>ATP</name>
        <dbReference type="ChEBI" id="CHEBI:30616"/>
    </ligand>
</feature>
<feature type="binding site" evidence="1">
    <location>
        <position position="155"/>
    </location>
    <ligand>
        <name>ATP</name>
        <dbReference type="ChEBI" id="CHEBI:30616"/>
    </ligand>
</feature>
<feature type="binding site" evidence="1">
    <location>
        <position position="156"/>
    </location>
    <ligand>
        <name>ATP</name>
        <dbReference type="ChEBI" id="CHEBI:30616"/>
    </ligand>
</feature>
<feature type="binding site" evidence="1">
    <location>
        <position position="157"/>
    </location>
    <ligand>
        <name>ATP</name>
        <dbReference type="ChEBI" id="CHEBI:30616"/>
    </ligand>
</feature>